<accession>Q7NS97</accession>
<gene>
    <name evidence="1" type="primary">hisZ</name>
    <name type="ordered locus">CV_3529</name>
</gene>
<keyword id="KW-0028">Amino-acid biosynthesis</keyword>
<keyword id="KW-0963">Cytoplasm</keyword>
<keyword id="KW-0368">Histidine biosynthesis</keyword>
<keyword id="KW-1185">Reference proteome</keyword>
<protein>
    <recommendedName>
        <fullName evidence="1">ATP phosphoribosyltransferase regulatory subunit</fullName>
    </recommendedName>
</protein>
<evidence type="ECO:0000255" key="1">
    <source>
        <dbReference type="HAMAP-Rule" id="MF_00125"/>
    </source>
</evidence>
<comment type="function">
    <text evidence="1">Required for the first step of histidine biosynthesis. May allow the feedback regulation of ATP phosphoribosyltransferase activity by histidine.</text>
</comment>
<comment type="pathway">
    <text evidence="1">Amino-acid biosynthesis; L-histidine biosynthesis; L-histidine from 5-phospho-alpha-D-ribose 1-diphosphate: step 1/9.</text>
</comment>
<comment type="subunit">
    <text evidence="1">Heteromultimer composed of HisG and HisZ subunits.</text>
</comment>
<comment type="subcellular location">
    <subcellularLocation>
        <location evidence="1">Cytoplasm</location>
    </subcellularLocation>
</comment>
<comment type="miscellaneous">
    <text>This function is generally fulfilled by the C-terminal part of HisG, which is missing in some bacteria such as this one.</text>
</comment>
<comment type="similarity">
    <text evidence="1">Belongs to the class-II aminoacyl-tRNA synthetase family. HisZ subfamily.</text>
</comment>
<organism>
    <name type="scientific">Chromobacterium violaceum (strain ATCC 12472 / DSM 30191 / JCM 1249 / CCUG 213 / NBRC 12614 / NCIMB 9131 / NCTC 9757 / MK)</name>
    <dbReference type="NCBI Taxonomy" id="243365"/>
    <lineage>
        <taxon>Bacteria</taxon>
        <taxon>Pseudomonadati</taxon>
        <taxon>Pseudomonadota</taxon>
        <taxon>Betaproteobacteria</taxon>
        <taxon>Neisseriales</taxon>
        <taxon>Chromobacteriaceae</taxon>
        <taxon>Chromobacterium</taxon>
    </lineage>
</organism>
<reference key="1">
    <citation type="journal article" date="2003" name="Proc. Natl. Acad. Sci. U.S.A.">
        <title>The complete genome sequence of Chromobacterium violaceum reveals remarkable and exploitable bacterial adaptability.</title>
        <authorList>
            <person name="Vasconcelos A.T.R."/>
            <person name="de Almeida D.F."/>
            <person name="Hungria M."/>
            <person name="Guimaraes C.T."/>
            <person name="Antonio R.V."/>
            <person name="Almeida F.C."/>
            <person name="de Almeida L.G.P."/>
            <person name="de Almeida R."/>
            <person name="Alves-Gomes J.A."/>
            <person name="Andrade E.M."/>
            <person name="Araripe J."/>
            <person name="de Araujo M.F.F."/>
            <person name="Astolfi-Filho S."/>
            <person name="Azevedo V."/>
            <person name="Baptista A.J."/>
            <person name="Bataus L.A.M."/>
            <person name="Batista J.S."/>
            <person name="Belo A."/>
            <person name="van den Berg C."/>
            <person name="Bogo M."/>
            <person name="Bonatto S."/>
            <person name="Bordignon J."/>
            <person name="Brigido M.M."/>
            <person name="Brito C.A."/>
            <person name="Brocchi M."/>
            <person name="Burity H.A."/>
            <person name="Camargo A.A."/>
            <person name="Cardoso D.D.P."/>
            <person name="Carneiro N.P."/>
            <person name="Carraro D.M."/>
            <person name="Carvalho C.M.B."/>
            <person name="Cascardo J.C.M."/>
            <person name="Cavada B.S."/>
            <person name="Chueire L.M.O."/>
            <person name="Creczynski-Pasa T.B."/>
            <person name="Cunha-Junior N.C."/>
            <person name="Fagundes N."/>
            <person name="Falcao C.L."/>
            <person name="Fantinatti F."/>
            <person name="Farias I.P."/>
            <person name="Felipe M.S.S."/>
            <person name="Ferrari L.P."/>
            <person name="Ferro J.A."/>
            <person name="Ferro M.I.T."/>
            <person name="Franco G.R."/>
            <person name="Freitas N.S.A."/>
            <person name="Furlan L.R."/>
            <person name="Gazzinelli R.T."/>
            <person name="Gomes E.A."/>
            <person name="Goncalves P.R."/>
            <person name="Grangeiro T.B."/>
            <person name="Grattapaglia D."/>
            <person name="Grisard E.C."/>
            <person name="Hanna E.S."/>
            <person name="Jardim S.N."/>
            <person name="Laurino J."/>
            <person name="Leoi L.C.T."/>
            <person name="Lima L.F.A."/>
            <person name="Loureiro M.F."/>
            <person name="Lyra M.C.C.P."/>
            <person name="Madeira H.M.F."/>
            <person name="Manfio G.P."/>
            <person name="Maranhao A.Q."/>
            <person name="Martins W.S."/>
            <person name="di Mauro S.M.Z."/>
            <person name="de Medeiros S.R.B."/>
            <person name="Meissner R.V."/>
            <person name="Moreira M.A.M."/>
            <person name="Nascimento F.F."/>
            <person name="Nicolas M.F."/>
            <person name="Oliveira J.G."/>
            <person name="Oliveira S.C."/>
            <person name="Paixao R.F.C."/>
            <person name="Parente J.A."/>
            <person name="Pedrosa F.O."/>
            <person name="Pena S.D.J."/>
            <person name="Pereira J.O."/>
            <person name="Pereira M."/>
            <person name="Pinto L.S.R.C."/>
            <person name="Pinto L.S."/>
            <person name="Porto J.I.R."/>
            <person name="Potrich D.P."/>
            <person name="Ramalho-Neto C.E."/>
            <person name="Reis A.M.M."/>
            <person name="Rigo L.U."/>
            <person name="Rondinelli E."/>
            <person name="Santos E.B.P."/>
            <person name="Santos F.R."/>
            <person name="Schneider M.P.C."/>
            <person name="Seuanez H.N."/>
            <person name="Silva A.M.R."/>
            <person name="da Silva A.L.C."/>
            <person name="Silva D.W."/>
            <person name="Silva R."/>
            <person name="Simoes I.C."/>
            <person name="Simon D."/>
            <person name="Soares C.M.A."/>
            <person name="Soares R.B.A."/>
            <person name="Souza E.M."/>
            <person name="Souza K.R.L."/>
            <person name="Souza R.C."/>
            <person name="Steffens M.B.R."/>
            <person name="Steindel M."/>
            <person name="Teixeira S.R."/>
            <person name="Urmenyi T."/>
            <person name="Vettore A."/>
            <person name="Wassem R."/>
            <person name="Zaha A."/>
            <person name="Simpson A.J.G."/>
        </authorList>
    </citation>
    <scope>NUCLEOTIDE SEQUENCE [LARGE SCALE GENOMIC DNA]</scope>
    <source>
        <strain>ATCC 12472 / DSM 30191 / JCM 1249 / CCUG 213 / NBRC 12614 / NCIMB 9131 / NCTC 9757 / MK</strain>
    </source>
</reference>
<sequence>MRNWLLPEYIADILPATARQVESAKAAMLEGFRVAGYELVLPPLIEYIDSLVSEGDDTLDLKTFKLDDQLSGRQLGLRADITPQVARIDAHLLGERTGVTRLCYAGSVVHSRPSGLTSSREPLQVGAELYGYAGIEADQEIIELMLATLEKAGVKKLRLDVGHIAIYRGLAAAAGLSPEVSRELFGLLQNKDAAGIAARVAGVAEPYKSAFLALPELYGPAAVLEKARTRLPSLPEVELGLMQLSAIARAMEGRVELSFDLAELRGDFYHTGLMFAAYAPGWSDAIARGGRYDNVGRRFGRARPATGFSLDLRDLLRILPERDPSRGIRVSARHLPAAAAEVSRLRAEGEMVVVDYLGESAAALNCDRELVPAADGWQLAPFH</sequence>
<dbReference type="EMBL" id="AE016825">
    <property type="protein sequence ID" value="AAQ61191.1"/>
    <property type="molecule type" value="Genomic_DNA"/>
</dbReference>
<dbReference type="RefSeq" id="WP_011137076.1">
    <property type="nucleotide sequence ID" value="NC_005085.1"/>
</dbReference>
<dbReference type="SMR" id="Q7NS97"/>
<dbReference type="STRING" id="243365.CV_3529"/>
<dbReference type="KEGG" id="cvi:CV_3529"/>
<dbReference type="eggNOG" id="COG3705">
    <property type="taxonomic scope" value="Bacteria"/>
</dbReference>
<dbReference type="HOGENOM" id="CLU_025113_0_1_4"/>
<dbReference type="OrthoDB" id="9769617at2"/>
<dbReference type="UniPathway" id="UPA00031">
    <property type="reaction ID" value="UER00006"/>
</dbReference>
<dbReference type="Proteomes" id="UP000001424">
    <property type="component" value="Chromosome"/>
</dbReference>
<dbReference type="GO" id="GO:0005737">
    <property type="term" value="C:cytoplasm"/>
    <property type="evidence" value="ECO:0007669"/>
    <property type="project" value="UniProtKB-SubCell"/>
</dbReference>
<dbReference type="GO" id="GO:0004821">
    <property type="term" value="F:histidine-tRNA ligase activity"/>
    <property type="evidence" value="ECO:0007669"/>
    <property type="project" value="TreeGrafter"/>
</dbReference>
<dbReference type="GO" id="GO:0006427">
    <property type="term" value="P:histidyl-tRNA aminoacylation"/>
    <property type="evidence" value="ECO:0007669"/>
    <property type="project" value="TreeGrafter"/>
</dbReference>
<dbReference type="GO" id="GO:0000105">
    <property type="term" value="P:L-histidine biosynthetic process"/>
    <property type="evidence" value="ECO:0007669"/>
    <property type="project" value="UniProtKB-UniRule"/>
</dbReference>
<dbReference type="CDD" id="cd00773">
    <property type="entry name" value="HisRS-like_core"/>
    <property type="match status" value="1"/>
</dbReference>
<dbReference type="Gene3D" id="3.30.930.10">
    <property type="entry name" value="Bira Bifunctional Protein, Domain 2"/>
    <property type="match status" value="1"/>
</dbReference>
<dbReference type="HAMAP" id="MF_00125">
    <property type="entry name" value="HisZ"/>
    <property type="match status" value="1"/>
</dbReference>
<dbReference type="InterPro" id="IPR045864">
    <property type="entry name" value="aa-tRNA-synth_II/BPL/LPL"/>
</dbReference>
<dbReference type="InterPro" id="IPR041715">
    <property type="entry name" value="HisRS-like_core"/>
</dbReference>
<dbReference type="InterPro" id="IPR004516">
    <property type="entry name" value="HisRS/HisZ"/>
</dbReference>
<dbReference type="InterPro" id="IPR004517">
    <property type="entry name" value="HisZ"/>
</dbReference>
<dbReference type="NCBIfam" id="NF008935">
    <property type="entry name" value="PRK12292.1-1"/>
    <property type="match status" value="1"/>
</dbReference>
<dbReference type="NCBIfam" id="NF009086">
    <property type="entry name" value="PRK12421.1"/>
    <property type="match status" value="1"/>
</dbReference>
<dbReference type="PANTHER" id="PTHR43707:SF1">
    <property type="entry name" value="HISTIDINE--TRNA LIGASE, MITOCHONDRIAL-RELATED"/>
    <property type="match status" value="1"/>
</dbReference>
<dbReference type="PANTHER" id="PTHR43707">
    <property type="entry name" value="HISTIDYL-TRNA SYNTHETASE"/>
    <property type="match status" value="1"/>
</dbReference>
<dbReference type="Pfam" id="PF13393">
    <property type="entry name" value="tRNA-synt_His"/>
    <property type="match status" value="1"/>
</dbReference>
<dbReference type="PIRSF" id="PIRSF001549">
    <property type="entry name" value="His-tRNA_synth"/>
    <property type="match status" value="1"/>
</dbReference>
<dbReference type="SUPFAM" id="SSF55681">
    <property type="entry name" value="Class II aaRS and biotin synthetases"/>
    <property type="match status" value="1"/>
</dbReference>
<feature type="chain" id="PRO_0000171032" description="ATP phosphoribosyltransferase regulatory subunit">
    <location>
        <begin position="1"/>
        <end position="383"/>
    </location>
</feature>
<name>HISZ_CHRVO</name>
<proteinExistence type="inferred from homology"/>